<gene>
    <name evidence="5" type="primary">pgpH</name>
    <name type="ordered locus">LMRG_00918</name>
</gene>
<proteinExistence type="evidence at protein level"/>
<evidence type="ECO:0000255" key="1"/>
<evidence type="ECO:0000255" key="2">
    <source>
        <dbReference type="PROSITE-ProRule" id="PRU01175"/>
    </source>
</evidence>
<evidence type="ECO:0000256" key="3">
    <source>
        <dbReference type="SAM" id="MobiDB-lite"/>
    </source>
</evidence>
<evidence type="ECO:0000269" key="4">
    <source>
    </source>
</evidence>
<evidence type="ECO:0000303" key="5">
    <source>
    </source>
</evidence>
<evidence type="ECO:0000305" key="6"/>
<evidence type="ECO:0000305" key="7">
    <source>
    </source>
</evidence>
<sequence>MKLAKKWRDWYIESGKKYLFPLLLVCFAVIAYFLVCQMTKPESYNVKLFQVAEKTIRSPQTVEDTEKTKEERTKASDAVEDVYVYNRETGQNRVALIQSLFAYVNEVNAEAQEKDTKNKEKAKKENKPAPAPTSTEDKLKNLKDKLSSNVSEKITSNISDEVFTTLIEAKSKDFNVMEDVVTTEVEKSMENKIRDENLNSVKIRARDDIELSAIPAYYKNVSKALVSYAIVPNEVYDEEQTDARRKEAAQSVVPVKILQGQVIVQEGQIVDRETYRQLKMLHLLDQKMPVKQYAGFAIFIIALAAILFLYTKKQTQPKAKKMQTMLIFSSVYLVSLFMLFIILFLETQNIANIAFLFPAAFAPMILKILLNEKYAFLSVIFIAVTSLLTFQNDATSGITIFILLSGATSVVMLRDYSRRSAIMLSGFMVGLINMIYVLLLLLINNSTLLQVSTLMALGYAFLGGFGAFILGVGVIPLFETIFGLLTTSRLVELANPNHPLLKKILMKAPGTYHHSMMVANLAEACADKIGANSLLVRVGCFYHDIGKTLRPPYFVENQLQGINPHDRLTPEQSRDIILSHTKDGAEILKENHMPQPIIDIALQHHGTTLLKYFYFKAKETNPDVKEADYRYSGPKPQTKEIAIINISDSVEAAVRSSTEPTMAKITEIIDGIIKDRFLDGQFTECDITIQEIKIIRDTLIATLNGIYHQRIQYPDDKD</sequence>
<comment type="function">
    <text evidence="4 6">A phosphodiesterase (PDE) that hydrolyzes cyclic di-3',5'-adenylate (c-di-AMP); there are at least 2 PDEs for c-di-AMP in this bacteria (this and pdeA), this may be the major PDE for growth in liquid culture (PubMed:25583510). During host infection c-di-AMP is secreted into the host cytoplasm which leads to interferon-beta production and secretion by the host (Probable). The cytoplasmic HD domain binds and hydrolyzes c-di-AMP to 5'-pApA; has very low activity against c-di-GMP, does not hydrolyze ppGpp (PubMed:25583510).</text>
</comment>
<comment type="catalytic activity">
    <reaction evidence="4">
        <text>3',3'-c-di-AMP + H2O = 5'-O-phosphonoadenylyl-(3'-&gt;5')-adenosine + H(+)</text>
        <dbReference type="Rhea" id="RHEA:54420"/>
        <dbReference type="ChEBI" id="CHEBI:15377"/>
        <dbReference type="ChEBI" id="CHEBI:15378"/>
        <dbReference type="ChEBI" id="CHEBI:71500"/>
        <dbReference type="ChEBI" id="CHEBI:138171"/>
        <dbReference type="EC" id="3.1.4.59"/>
    </reaction>
</comment>
<comment type="cofactor">
    <cofactor evidence="4">
        <name>Mn(2+)</name>
        <dbReference type="ChEBI" id="CHEBI:29035"/>
    </cofactor>
    <text evidence="4">Able to bind Fe(2+), but has only very weak PDE activity.</text>
</comment>
<comment type="activity regulation">
    <text evidence="4">c-di-AMP hydrolysis inhibited by ppGpp, without altering c-di-AMP binding.</text>
</comment>
<comment type="subcellular location">
    <subcellularLocation>
        <location evidence="1">Cell membrane</location>
        <topology evidence="1">Multi-pass membrane protein</topology>
    </subcellularLocation>
</comment>
<comment type="domain">
    <text evidence="4">The cytoplasmic domain (residues 494-718, expressed as a maltose-binding protein fusion) has c-di-AMP phosphodiesterase activity.</text>
</comment>
<comment type="disruption phenotype">
    <text evidence="4">Grows as well as wild-type in culture and in macrophages, double pdeA-pgpH mutants have slightly defective growth in culture and in macrophages. Single mutant secretes 2-fold more c-di-AMP, double mutant secretes about 4-fold more. Single mutant induces wild-type interferon-beta (IFN-beta) transcription by macrophages, double pdeA-pgpH mutants induces about 10-fold more IFN-beta. Double mutant is 10(3)-fold less virulent in mice, suggesting increased bacterial c-di-AMP is detrimental to growth within the host.</text>
</comment>
<comment type="similarity">
    <text evidence="6">Belongs to the PgpH phosphodiesterase family.</text>
</comment>
<accession>A0A0H3GGY3</accession>
<reference key="1">
    <citation type="submission" date="2010-04" db="EMBL/GenBank/DDBJ databases">
        <title>The genome sequence of Listeria monocytogenes strain 10403S.</title>
        <authorList>
            <consortium name="The Broad Institute Genome Sequencing Platform"/>
            <consortium name="The Broad Institute Genome Sequencing Center for Infectious Disease"/>
            <person name="Borowsky M."/>
            <person name="Borodovsky M."/>
            <person name="Young S.K."/>
            <person name="Zeng Q."/>
            <person name="Koehrsen M."/>
            <person name="Fitzgerald M."/>
            <person name="Wiedmann M."/>
            <person name="Swaminathan B."/>
            <person name="Lauer P."/>
            <person name="Portnoy D."/>
            <person name="Cossart P."/>
            <person name="Buchrieser C."/>
            <person name="Higgins D."/>
            <person name="Abouelleil A."/>
            <person name="Alvarado L."/>
            <person name="Arachchi H.M."/>
            <person name="Berlin A."/>
            <person name="Borenstein D."/>
            <person name="Brown A."/>
            <person name="Chapman S.B."/>
            <person name="Chen Z."/>
            <person name="Dunbar C.D."/>
            <person name="Engels R."/>
            <person name="Freedman E."/>
            <person name="Gearin G."/>
            <person name="Gellesch M."/>
            <person name="Goldberg J."/>
            <person name="Griggs A."/>
            <person name="Gujja S."/>
            <person name="Heilman E."/>
            <person name="Heiman D."/>
            <person name="Howarth C."/>
            <person name="Jen D."/>
            <person name="Larson L."/>
            <person name="Lui A."/>
            <person name="MacDonald J."/>
            <person name="Mehta T."/>
            <person name="Montmayeur A."/>
            <person name="Neiman D."/>
            <person name="Park D."/>
            <person name="Pearson M."/>
            <person name="Priest M."/>
            <person name="Richards J."/>
            <person name="Roberts A."/>
            <person name="Saif S."/>
            <person name="Shea T."/>
            <person name="Shenoy N."/>
            <person name="Sisk P."/>
            <person name="Stolte C."/>
            <person name="Sykes S."/>
            <person name="Walk T."/>
            <person name="White J."/>
            <person name="Yandava C."/>
            <person name="Haas B."/>
            <person name="Nusbaum C."/>
            <person name="Birren B."/>
        </authorList>
    </citation>
    <scope>NUCLEOTIDE SEQUENCE [LARGE SCALE GENOMIC DNA]</scope>
    <source>
        <strain>10403S</strain>
    </source>
</reference>
<reference key="2">
    <citation type="journal article" date="2015" name="Proc. Natl. Acad. Sci. U.S.A.">
        <title>An HD-domain phosphodiesterase mediates cooperative hydrolysis of c-di-AMP to affect bacterial growth and virulence.</title>
        <authorList>
            <person name="Huynh T.N."/>
            <person name="Luo S."/>
            <person name="Pensinger D."/>
            <person name="Sauer J.D."/>
            <person name="Tong L."/>
            <person name="Woodward J.J."/>
        </authorList>
    </citation>
    <scope>X-RAY CRYSTALLOGRAPHY (2.10 ANGSTROMS) OF 494-715 IN COMPLEX WITH C-DI-AMP AND MANGANESE</scope>
    <scope>FUNCTION</scope>
    <scope>CATALYTIC ACTIVITY</scope>
    <scope>COFACTOR</scope>
    <scope>ACTIVITY REGULATION</scope>
    <scope>DOMAIN</scope>
    <scope>DISRUPTION PHENOTYPE</scope>
    <scope>MUTAGENESIS OF HIS-543 AND ASP-544</scope>
    <source>
        <strain>10403S / JW06</strain>
    </source>
</reference>
<protein>
    <recommendedName>
        <fullName evidence="5">Cyclic-di-AMP phosphodiesterase PgpH</fullName>
        <shortName>c-di-AMP phosphodiesterase</shortName>
        <ecNumber evidence="4">3.1.4.59</ecNumber>
    </recommendedName>
</protein>
<name>PGPH_LISM4</name>
<dbReference type="EC" id="3.1.4.59" evidence="4"/>
<dbReference type="EMBL" id="CP002002">
    <property type="protein sequence ID" value="AEO06451.1"/>
    <property type="molecule type" value="Genomic_DNA"/>
</dbReference>
<dbReference type="RefSeq" id="WP_003721972.1">
    <property type="nucleotide sequence ID" value="NC_017544.1"/>
</dbReference>
<dbReference type="PDB" id="4S1B">
    <property type="method" value="X-ray"/>
    <property type="resolution" value="2.10 A"/>
    <property type="chains" value="A/D=494-715"/>
</dbReference>
<dbReference type="PDB" id="4S1C">
    <property type="method" value="X-ray"/>
    <property type="resolution" value="2.40 A"/>
    <property type="chains" value="A/D=494-715"/>
</dbReference>
<dbReference type="PDBsum" id="4S1B"/>
<dbReference type="PDBsum" id="4S1C"/>
<dbReference type="SMR" id="A0A0H3GGY3"/>
<dbReference type="KEGG" id="lmt:LMRG_00918"/>
<dbReference type="HOGENOM" id="CLU_015767_1_2_9"/>
<dbReference type="Proteomes" id="UP000001288">
    <property type="component" value="Chromosome"/>
</dbReference>
<dbReference type="GO" id="GO:0005886">
    <property type="term" value="C:plasma membrane"/>
    <property type="evidence" value="ECO:0007669"/>
    <property type="project" value="UniProtKB-SubCell"/>
</dbReference>
<dbReference type="GO" id="GO:0106409">
    <property type="term" value="F:cyclic-di-AMP phosphodiesterase activity"/>
    <property type="evidence" value="ECO:0007669"/>
    <property type="project" value="UniProtKB-EC"/>
</dbReference>
<dbReference type="GO" id="GO:0016787">
    <property type="term" value="F:hydrolase activity"/>
    <property type="evidence" value="ECO:0007669"/>
    <property type="project" value="UniProtKB-KW"/>
</dbReference>
<dbReference type="GO" id="GO:0046872">
    <property type="term" value="F:metal ion binding"/>
    <property type="evidence" value="ECO:0007669"/>
    <property type="project" value="UniProtKB-KW"/>
</dbReference>
<dbReference type="GO" id="GO:0000166">
    <property type="term" value="F:nucleotide binding"/>
    <property type="evidence" value="ECO:0007669"/>
    <property type="project" value="UniProtKB-KW"/>
</dbReference>
<dbReference type="CDD" id="cd00077">
    <property type="entry name" value="HDc"/>
    <property type="match status" value="1"/>
</dbReference>
<dbReference type="Gene3D" id="1.10.3210.10">
    <property type="entry name" value="Hypothetical protein af1432"/>
    <property type="match status" value="1"/>
</dbReference>
<dbReference type="InterPro" id="IPR003607">
    <property type="entry name" value="HD/PDEase_dom"/>
</dbReference>
<dbReference type="InterPro" id="IPR006674">
    <property type="entry name" value="HD_domain"/>
</dbReference>
<dbReference type="InterPro" id="IPR006675">
    <property type="entry name" value="HDIG_dom"/>
</dbReference>
<dbReference type="InterPro" id="IPR011624">
    <property type="entry name" value="Metal-dep_PHydrolase_7TM_extra"/>
</dbReference>
<dbReference type="InterPro" id="IPR011621">
    <property type="entry name" value="Metal-dep_PHydrolase_7TM_intra"/>
</dbReference>
<dbReference type="InterPro" id="IPR052722">
    <property type="entry name" value="PgpH_phosphodiesterase"/>
</dbReference>
<dbReference type="NCBIfam" id="TIGR00277">
    <property type="entry name" value="HDIG"/>
    <property type="match status" value="1"/>
</dbReference>
<dbReference type="PANTHER" id="PTHR36442">
    <property type="entry name" value="CYCLIC-DI-AMP PHOSPHODIESTERASE PGPH"/>
    <property type="match status" value="1"/>
</dbReference>
<dbReference type="PANTHER" id="PTHR36442:SF1">
    <property type="entry name" value="CYCLIC-DI-AMP PHOSPHODIESTERASE PGPH"/>
    <property type="match status" value="1"/>
</dbReference>
<dbReference type="Pfam" id="PF07698">
    <property type="entry name" value="7TM-7TMR_HD"/>
    <property type="match status" value="1"/>
</dbReference>
<dbReference type="Pfam" id="PF07697">
    <property type="entry name" value="7TMR-HDED"/>
    <property type="match status" value="1"/>
</dbReference>
<dbReference type="Pfam" id="PF01966">
    <property type="entry name" value="HD"/>
    <property type="match status" value="1"/>
</dbReference>
<dbReference type="SMART" id="SM00471">
    <property type="entry name" value="HDc"/>
    <property type="match status" value="1"/>
</dbReference>
<dbReference type="SUPFAM" id="SSF109604">
    <property type="entry name" value="HD-domain/PDEase-like"/>
    <property type="match status" value="1"/>
</dbReference>
<dbReference type="PROSITE" id="PS51831">
    <property type="entry name" value="HD"/>
    <property type="match status" value="1"/>
</dbReference>
<keyword id="KW-0002">3D-structure</keyword>
<keyword id="KW-1003">Cell membrane</keyword>
<keyword id="KW-0378">Hydrolase</keyword>
<keyword id="KW-0464">Manganese</keyword>
<keyword id="KW-0472">Membrane</keyword>
<keyword id="KW-0479">Metal-binding</keyword>
<keyword id="KW-0547">Nucleotide-binding</keyword>
<keyword id="KW-0812">Transmembrane</keyword>
<keyword id="KW-1133">Transmembrane helix</keyword>
<organism>
    <name type="scientific">Listeria monocytogenes serotype 1/2a (strain 10403S)</name>
    <dbReference type="NCBI Taxonomy" id="393133"/>
    <lineage>
        <taxon>Bacteria</taxon>
        <taxon>Bacillati</taxon>
        <taxon>Bacillota</taxon>
        <taxon>Bacilli</taxon>
        <taxon>Bacillales</taxon>
        <taxon>Listeriaceae</taxon>
        <taxon>Listeria</taxon>
    </lineage>
</organism>
<feature type="chain" id="PRO_0000436054" description="Cyclic-di-AMP phosphodiesterase PgpH">
    <location>
        <begin position="1"/>
        <end position="718"/>
    </location>
</feature>
<feature type="topological domain" description="Cytoplasmic" evidence="6">
    <location>
        <begin position="1"/>
        <end position="17"/>
    </location>
</feature>
<feature type="transmembrane region" description="Helical" evidence="1">
    <location>
        <begin position="18"/>
        <end position="38"/>
    </location>
</feature>
<feature type="topological domain" description="Extracellular" evidence="6">
    <location>
        <begin position="39"/>
        <end position="289"/>
    </location>
</feature>
<feature type="transmembrane region" description="Helical" evidence="1">
    <location>
        <begin position="290"/>
        <end position="310"/>
    </location>
</feature>
<feature type="topological domain" description="Cytoplasmic" evidence="6">
    <location>
        <begin position="311"/>
        <end position="324"/>
    </location>
</feature>
<feature type="transmembrane region" description="Helical" evidence="1">
    <location>
        <begin position="325"/>
        <end position="345"/>
    </location>
</feature>
<feature type="topological domain" description="Extracellular" evidence="6">
    <location>
        <begin position="346"/>
        <end position="349"/>
    </location>
</feature>
<feature type="transmembrane region" description="Helical" evidence="1">
    <location>
        <begin position="350"/>
        <end position="370"/>
    </location>
</feature>
<feature type="transmembrane region" description="Helical" evidence="1">
    <location>
        <begin position="371"/>
        <end position="391"/>
    </location>
</feature>
<feature type="topological domain" description="Extracellular" evidence="6">
    <location>
        <position position="392"/>
    </location>
</feature>
<feature type="transmembrane region" description="Helical" evidence="1">
    <location>
        <begin position="393"/>
        <end position="413"/>
    </location>
</feature>
<feature type="topological domain" description="Cytoplasmic" evidence="6">
    <location>
        <begin position="414"/>
        <end position="421"/>
    </location>
</feature>
<feature type="transmembrane region" description="Helical" evidence="1">
    <location>
        <begin position="422"/>
        <end position="442"/>
    </location>
</feature>
<feature type="topological domain" description="Extracellular" evidence="6">
    <location>
        <begin position="443"/>
        <end position="457"/>
    </location>
</feature>
<feature type="transmembrane region" description="Helical" evidence="1">
    <location>
        <begin position="458"/>
        <end position="478"/>
    </location>
</feature>
<feature type="topological domain" description="Cytoplasmic" evidence="6">
    <location>
        <begin position="479"/>
        <end position="718"/>
    </location>
</feature>
<feature type="domain" description="HD" evidence="2">
    <location>
        <begin position="511"/>
        <end position="653"/>
    </location>
</feature>
<feature type="region of interest" description="Disordered" evidence="3">
    <location>
        <begin position="112"/>
        <end position="140"/>
    </location>
</feature>
<feature type="compositionally biased region" description="Basic and acidic residues" evidence="3">
    <location>
        <begin position="112"/>
        <end position="127"/>
    </location>
</feature>
<feature type="binding site" evidence="7">
    <location>
        <position position="514"/>
    </location>
    <ligand>
        <name>Mn(2+)</name>
        <dbReference type="ChEBI" id="CHEBI:29035"/>
        <label>1</label>
    </ligand>
</feature>
<feature type="binding site" evidence="7">
    <location>
        <position position="514"/>
    </location>
    <ligand>
        <name>substrate</name>
    </ligand>
</feature>
<feature type="binding site" evidence="7">
    <location>
        <position position="543"/>
    </location>
    <ligand>
        <name>Mn(2+)</name>
        <dbReference type="ChEBI" id="CHEBI:29035"/>
        <label>1</label>
    </ligand>
</feature>
<feature type="binding site" evidence="7">
    <location>
        <begin position="544"/>
        <end position="547"/>
    </location>
    <ligand>
        <name>substrate</name>
    </ligand>
</feature>
<feature type="binding site" evidence="7">
    <location>
        <position position="544"/>
    </location>
    <ligand>
        <name>Mn(2+)</name>
        <dbReference type="ChEBI" id="CHEBI:29035"/>
        <label>1</label>
    </ligand>
</feature>
<feature type="binding site" evidence="7">
    <location>
        <position position="544"/>
    </location>
    <ligand>
        <name>Mn(2+)</name>
        <dbReference type="ChEBI" id="CHEBI:29035"/>
        <label>2</label>
    </ligand>
</feature>
<feature type="binding site" evidence="7">
    <location>
        <begin position="555"/>
        <end position="556"/>
    </location>
    <ligand>
        <name>substrate</name>
    </ligand>
</feature>
<feature type="binding site" evidence="7">
    <location>
        <position position="580"/>
    </location>
    <ligand>
        <name>Mn(2+)</name>
        <dbReference type="ChEBI" id="CHEBI:29035"/>
        <label>2</label>
    </ligand>
</feature>
<feature type="binding site" evidence="7">
    <location>
        <position position="604"/>
    </location>
    <ligand>
        <name>Mn(2+)</name>
        <dbReference type="ChEBI" id="CHEBI:29035"/>
        <label>2</label>
    </ligand>
</feature>
<feature type="binding site" evidence="7">
    <location>
        <position position="605"/>
    </location>
    <ligand>
        <name>Mn(2+)</name>
        <dbReference type="ChEBI" id="CHEBI:29035"/>
        <label>2</label>
    </ligand>
</feature>
<feature type="binding site" evidence="7">
    <location>
        <position position="631"/>
    </location>
    <ligand>
        <name>substrate</name>
    </ligand>
</feature>
<feature type="binding site" evidence="7">
    <location>
        <position position="648"/>
    </location>
    <ligand>
        <name>Mn(2+)</name>
        <dbReference type="ChEBI" id="CHEBI:29035"/>
        <label>1</label>
    </ligand>
</feature>
<feature type="binding site" evidence="7">
    <location>
        <position position="648"/>
    </location>
    <ligand>
        <name>substrate</name>
    </ligand>
</feature>
<feature type="mutagenesis site" description="Decreased Mn(2+) binding, decreased c-di-AMP binding, no c-di-AMP hydrolysis." evidence="4">
    <original>H</original>
    <variation>A</variation>
    <location>
        <position position="543"/>
    </location>
</feature>
<feature type="mutagenesis site" description="Loss of Mn(2+) binding, considerably decreased c-di-AMP binding, no c-di-AMP hydrolysis." evidence="4">
    <original>D</original>
    <variation>A</variation>
    <location>
        <position position="544"/>
    </location>
</feature>